<keyword id="KW-0408">Iron</keyword>
<keyword id="KW-0411">Iron-sulfur</keyword>
<keyword id="KW-0479">Metal-binding</keyword>
<keyword id="KW-1185">Reference proteome</keyword>
<organism>
    <name type="scientific">Xenopus laevis</name>
    <name type="common">African clawed frog</name>
    <dbReference type="NCBI Taxonomy" id="8355"/>
    <lineage>
        <taxon>Eukaryota</taxon>
        <taxon>Metazoa</taxon>
        <taxon>Chordata</taxon>
        <taxon>Craniata</taxon>
        <taxon>Vertebrata</taxon>
        <taxon>Euteleostomi</taxon>
        <taxon>Amphibia</taxon>
        <taxon>Batrachia</taxon>
        <taxon>Anura</taxon>
        <taxon>Pipoidea</taxon>
        <taxon>Pipidae</taxon>
        <taxon>Xenopodinae</taxon>
        <taxon>Xenopus</taxon>
        <taxon>Xenopus</taxon>
    </lineage>
</organism>
<evidence type="ECO:0000250" key="1">
    <source>
        <dbReference type="UniProtKB" id="P32461"/>
    </source>
</evidence>
<evidence type="ECO:0000305" key="2"/>
<accession>Q6DE00</accession>
<protein>
    <recommendedName>
        <fullName evidence="2">2-(3-amino-3-carboxypropyl)histidine synthase subunit 2</fullName>
    </recommendedName>
    <alternativeName>
        <fullName>Diphthamide biosynthesis protein 2</fullName>
    </alternativeName>
    <alternativeName>
        <fullName evidence="2">Diphtheria toxin resistance protein 2</fullName>
    </alternativeName>
    <alternativeName>
        <fullName evidence="2">S-adenosyl-L-methionine:L-histidine 3-amino-3-carboxypropyltransferase 2</fullName>
    </alternativeName>
</protein>
<sequence>MAAALFSSNGEEAIGRNIDIGQVDIQSSPEKDLGEFYEIEKTVEFIQRNAAQKVALQFPDDLLLDSVKVARKLEEATGAKTYILGDTSYGSCCVDEVAAEHVKANVLVHYGRACLSPCCRLPVSYVFGRKAVNMDLCAEAFLSHYRDTESHVVVLSDVVYDHALGELAKRIRSAYPNVIFSKLTSCGETASPDEIVKFGRRFSPDLRLWPESYGIFYVGGEGSTLNNLMLTWPRCSFFSFNPFTGEGRTEGLHVNRALMIRFYLIERARDAHVFGILVGTLGVSDYLSALKHLKNIIHLAGKKSYMFSVGKLNPAKLANFPEIDVFVLVACPENSLLDSSEFYKPVVTPDEMEIACNPAREWHGYCITNFRELLPGGSAYVEFPETDPSDAHHTDVSLITGNLRSSHLTVAETLEKDSDTSLVQRNSKTALAQMSSAASYLASRSWQGLDKALGQTPVVKAVEGRKGIAIAYEDEICS</sequence>
<comment type="function">
    <text evidence="1">Required for the first step of diphthamide biosynthesis, a post-translational modification of histidine which occurs in elongation factor 2 (By similarity). Dph1 and dph2 transfer a 3-amino-3-carboxypropyl (ACP) group from S-adenosyl-L-methionine (SAM) to a histidine residue, the reaction is assisted by a reduction system comprising dph3 and a NADH-dependent reductase (By similarity). Facilitates the reduction of the catalytic iron-sulfur cluster found in the dph1 subunit (By similarity).</text>
</comment>
<comment type="cofactor">
    <cofactor evidence="1">
        <name>[4Fe-4S] cluster</name>
        <dbReference type="ChEBI" id="CHEBI:49883"/>
    </cofactor>
    <text evidence="1">Binds 1 [4Fe-4S] cluster per subunit. The cluster facilitates the reduction of the catalytic iron-sulfur cluster in the dph1 subunit.</text>
</comment>
<comment type="pathway">
    <text evidence="2">Protein modification; peptidyl-diphthamide biosynthesis.</text>
</comment>
<comment type="subunit">
    <text evidence="1">Component of the 2-(3-amino-3-carboxypropyl)histidine synthase complex composed of dph1, dph2, dph3 and a NADH-dependent reductase.</text>
</comment>
<comment type="similarity">
    <text evidence="2">Belongs to the DPH1/DPH2 family. DPH2 subfamily.</text>
</comment>
<feature type="chain" id="PRO_0000307895" description="2-(3-amino-3-carboxypropyl)histidine synthase subunit 2">
    <location>
        <begin position="1"/>
        <end position="478"/>
    </location>
</feature>
<feature type="binding site" evidence="1">
    <location>
        <position position="93"/>
    </location>
    <ligand>
        <name>[4Fe-4S] cluster</name>
        <dbReference type="ChEBI" id="CHEBI:49883"/>
    </ligand>
</feature>
<feature type="binding site" evidence="1">
    <location>
        <position position="114"/>
    </location>
    <ligand>
        <name>[4Fe-4S] cluster</name>
        <dbReference type="ChEBI" id="CHEBI:49883"/>
    </ligand>
</feature>
<feature type="binding site" evidence="1">
    <location>
        <position position="331"/>
    </location>
    <ligand>
        <name>[4Fe-4S] cluster</name>
        <dbReference type="ChEBI" id="CHEBI:49883"/>
    </ligand>
</feature>
<dbReference type="EMBL" id="BC077348">
    <property type="protein sequence ID" value="AAH77348.1"/>
    <property type="molecule type" value="mRNA"/>
</dbReference>
<dbReference type="RefSeq" id="NP_001086718.1">
    <property type="nucleotide sequence ID" value="NM_001093249.1"/>
</dbReference>
<dbReference type="SMR" id="Q6DE00"/>
<dbReference type="DNASU" id="446553"/>
<dbReference type="GeneID" id="446553"/>
<dbReference type="KEGG" id="xla:446553"/>
<dbReference type="AGR" id="Xenbase:XB-GENE-980248"/>
<dbReference type="CTD" id="446553"/>
<dbReference type="Xenbase" id="XB-GENE-980248">
    <property type="gene designation" value="dph2.L"/>
</dbReference>
<dbReference type="OrthoDB" id="449241at2759"/>
<dbReference type="UniPathway" id="UPA00559"/>
<dbReference type="Proteomes" id="UP000186698">
    <property type="component" value="Chromosome 4L"/>
</dbReference>
<dbReference type="Bgee" id="446553">
    <property type="expression patterns" value="Expressed in ovary and 19 other cell types or tissues"/>
</dbReference>
<dbReference type="GO" id="GO:0120513">
    <property type="term" value="C:2-(3-amino-3-carboxypropyl)histidine synthase complex"/>
    <property type="evidence" value="ECO:0000250"/>
    <property type="project" value="UniProtKB"/>
</dbReference>
<dbReference type="GO" id="GO:0090560">
    <property type="term" value="F:2-(3-amino-3-carboxypropyl)histidine synthase activity"/>
    <property type="evidence" value="ECO:0007669"/>
    <property type="project" value="UniProtKB-EC"/>
</dbReference>
<dbReference type="GO" id="GO:0051539">
    <property type="term" value="F:4 iron, 4 sulfur cluster binding"/>
    <property type="evidence" value="ECO:0000250"/>
    <property type="project" value="UniProtKB"/>
</dbReference>
<dbReference type="GO" id="GO:0046872">
    <property type="term" value="F:metal ion binding"/>
    <property type="evidence" value="ECO:0007669"/>
    <property type="project" value="UniProtKB-KW"/>
</dbReference>
<dbReference type="GO" id="GO:0017183">
    <property type="term" value="P:protein histidyl modification to diphthamide"/>
    <property type="evidence" value="ECO:0000250"/>
    <property type="project" value="UniProtKB"/>
</dbReference>
<dbReference type="FunFam" id="3.40.50.11840:FF:000002">
    <property type="entry name" value="2-(3-amino-3-carboxypropyl)histidine synthase subunit 2"/>
    <property type="match status" value="1"/>
</dbReference>
<dbReference type="FunFam" id="3.40.50.11860:FF:000001">
    <property type="entry name" value="2-(3-amino-3-carboxypropyl)histidine synthase subunit 2"/>
    <property type="match status" value="1"/>
</dbReference>
<dbReference type="Gene3D" id="3.40.50.11840">
    <property type="entry name" value="Diphthamide synthesis DPH1/DPH2 domain 1"/>
    <property type="match status" value="1"/>
</dbReference>
<dbReference type="Gene3D" id="3.40.50.11860">
    <property type="entry name" value="Diphthamide synthesis DPH1/DPH2 domain 3"/>
    <property type="match status" value="1"/>
</dbReference>
<dbReference type="InterPro" id="IPR010014">
    <property type="entry name" value="DHP2"/>
</dbReference>
<dbReference type="InterPro" id="IPR016435">
    <property type="entry name" value="DPH1/DPH2"/>
</dbReference>
<dbReference type="InterPro" id="IPR042263">
    <property type="entry name" value="DPH1/DPH2_1"/>
</dbReference>
<dbReference type="InterPro" id="IPR042265">
    <property type="entry name" value="DPH1/DPH2_3"/>
</dbReference>
<dbReference type="NCBIfam" id="TIGR00322">
    <property type="entry name" value="diphth2_R"/>
    <property type="match status" value="1"/>
</dbReference>
<dbReference type="NCBIfam" id="TIGR00272">
    <property type="entry name" value="DPH2"/>
    <property type="match status" value="1"/>
</dbReference>
<dbReference type="PANTHER" id="PTHR10762:SF2">
    <property type="entry name" value="2-(3-AMINO-3-CARBOXYPROPYL)HISTIDINE SYNTHASE SUBUNIT 2"/>
    <property type="match status" value="1"/>
</dbReference>
<dbReference type="PANTHER" id="PTHR10762">
    <property type="entry name" value="DIPHTHAMIDE BIOSYNTHESIS PROTEIN"/>
    <property type="match status" value="1"/>
</dbReference>
<dbReference type="Pfam" id="PF01866">
    <property type="entry name" value="Diphthamide_syn"/>
    <property type="match status" value="1"/>
</dbReference>
<dbReference type="SFLD" id="SFLDG01121">
    <property type="entry name" value="Diphthamide_biosynthesis"/>
    <property type="match status" value="1"/>
</dbReference>
<dbReference type="SFLD" id="SFLDF00408">
    <property type="entry name" value="Diphthamide_biosynthesis_famil"/>
    <property type="match status" value="1"/>
</dbReference>
<dbReference type="SFLD" id="SFLDS00032">
    <property type="entry name" value="Radical_SAM_3-amino-3-carboxyp"/>
    <property type="match status" value="1"/>
</dbReference>
<name>DPH2_XENLA</name>
<proteinExistence type="evidence at transcript level"/>
<gene>
    <name type="primary">dph2</name>
</gene>
<reference key="1">
    <citation type="submission" date="2004-07" db="EMBL/GenBank/DDBJ databases">
        <authorList>
            <consortium name="NIH - Xenopus Gene Collection (XGC) project"/>
        </authorList>
    </citation>
    <scope>NUCLEOTIDE SEQUENCE [LARGE SCALE MRNA]</scope>
    <source>
        <tissue>Ovary</tissue>
    </source>
</reference>